<feature type="chain" id="PRO_1000193636" description="Gamma-glutamyl phosphate reductase">
    <location>
        <begin position="1"/>
        <end position="417"/>
    </location>
</feature>
<keyword id="KW-0028">Amino-acid biosynthesis</keyword>
<keyword id="KW-0963">Cytoplasm</keyword>
<keyword id="KW-0521">NADP</keyword>
<keyword id="KW-0560">Oxidoreductase</keyword>
<keyword id="KW-0641">Proline biosynthesis</keyword>
<keyword id="KW-1185">Reference proteome</keyword>
<protein>
    <recommendedName>
        <fullName evidence="1">Gamma-glutamyl phosphate reductase</fullName>
        <shortName evidence="1">GPR</shortName>
        <ecNumber evidence="1">1.2.1.41</ecNumber>
    </recommendedName>
    <alternativeName>
        <fullName evidence="1">Glutamate-5-semialdehyde dehydrogenase</fullName>
    </alternativeName>
    <alternativeName>
        <fullName evidence="1">Glutamyl-gamma-semialdehyde dehydrogenase</fullName>
        <shortName evidence="1">GSA dehydrogenase</shortName>
    </alternativeName>
</protein>
<name>PROA_PROMH</name>
<organism>
    <name type="scientific">Proteus mirabilis (strain HI4320)</name>
    <dbReference type="NCBI Taxonomy" id="529507"/>
    <lineage>
        <taxon>Bacteria</taxon>
        <taxon>Pseudomonadati</taxon>
        <taxon>Pseudomonadota</taxon>
        <taxon>Gammaproteobacteria</taxon>
        <taxon>Enterobacterales</taxon>
        <taxon>Morganellaceae</taxon>
        <taxon>Proteus</taxon>
    </lineage>
</organism>
<accession>B4EUV1</accession>
<proteinExistence type="inferred from homology"/>
<dbReference type="EC" id="1.2.1.41" evidence="1"/>
<dbReference type="EMBL" id="AM942759">
    <property type="protein sequence ID" value="CAR40950.1"/>
    <property type="molecule type" value="Genomic_DNA"/>
</dbReference>
<dbReference type="RefSeq" id="WP_004244786.1">
    <property type="nucleotide sequence ID" value="NC_010554.1"/>
</dbReference>
<dbReference type="SMR" id="B4EUV1"/>
<dbReference type="EnsemblBacteria" id="CAR40950">
    <property type="protein sequence ID" value="CAR40950"/>
    <property type="gene ID" value="PMI0370"/>
</dbReference>
<dbReference type="GeneID" id="6803645"/>
<dbReference type="KEGG" id="pmr:PMI0370"/>
<dbReference type="eggNOG" id="COG0014">
    <property type="taxonomic scope" value="Bacteria"/>
</dbReference>
<dbReference type="HOGENOM" id="CLU_030231_0_0_6"/>
<dbReference type="UniPathway" id="UPA00098">
    <property type="reaction ID" value="UER00360"/>
</dbReference>
<dbReference type="Proteomes" id="UP000008319">
    <property type="component" value="Chromosome"/>
</dbReference>
<dbReference type="GO" id="GO:0005737">
    <property type="term" value="C:cytoplasm"/>
    <property type="evidence" value="ECO:0007669"/>
    <property type="project" value="UniProtKB-SubCell"/>
</dbReference>
<dbReference type="GO" id="GO:0004350">
    <property type="term" value="F:glutamate-5-semialdehyde dehydrogenase activity"/>
    <property type="evidence" value="ECO:0007669"/>
    <property type="project" value="UniProtKB-UniRule"/>
</dbReference>
<dbReference type="GO" id="GO:0050661">
    <property type="term" value="F:NADP binding"/>
    <property type="evidence" value="ECO:0007669"/>
    <property type="project" value="InterPro"/>
</dbReference>
<dbReference type="GO" id="GO:0055129">
    <property type="term" value="P:L-proline biosynthetic process"/>
    <property type="evidence" value="ECO:0007669"/>
    <property type="project" value="UniProtKB-UniRule"/>
</dbReference>
<dbReference type="CDD" id="cd07079">
    <property type="entry name" value="ALDH_F18-19_ProA-GPR"/>
    <property type="match status" value="1"/>
</dbReference>
<dbReference type="FunFam" id="3.40.309.10:FF:000006">
    <property type="entry name" value="Gamma-glutamyl phosphate reductase"/>
    <property type="match status" value="1"/>
</dbReference>
<dbReference type="Gene3D" id="3.40.605.10">
    <property type="entry name" value="Aldehyde Dehydrogenase, Chain A, domain 1"/>
    <property type="match status" value="1"/>
</dbReference>
<dbReference type="Gene3D" id="3.40.309.10">
    <property type="entry name" value="Aldehyde Dehydrogenase, Chain A, domain 2"/>
    <property type="match status" value="1"/>
</dbReference>
<dbReference type="HAMAP" id="MF_00412">
    <property type="entry name" value="ProA"/>
    <property type="match status" value="1"/>
</dbReference>
<dbReference type="InterPro" id="IPR016161">
    <property type="entry name" value="Ald_DH/histidinol_DH"/>
</dbReference>
<dbReference type="InterPro" id="IPR016163">
    <property type="entry name" value="Ald_DH_C"/>
</dbReference>
<dbReference type="InterPro" id="IPR016162">
    <property type="entry name" value="Ald_DH_N"/>
</dbReference>
<dbReference type="InterPro" id="IPR015590">
    <property type="entry name" value="Aldehyde_DH_dom"/>
</dbReference>
<dbReference type="InterPro" id="IPR020593">
    <property type="entry name" value="G-glutamylP_reductase_CS"/>
</dbReference>
<dbReference type="InterPro" id="IPR012134">
    <property type="entry name" value="Glu-5-SA_DH"/>
</dbReference>
<dbReference type="InterPro" id="IPR000965">
    <property type="entry name" value="GPR_dom"/>
</dbReference>
<dbReference type="NCBIfam" id="NF001221">
    <property type="entry name" value="PRK00197.1"/>
    <property type="match status" value="1"/>
</dbReference>
<dbReference type="NCBIfam" id="TIGR00407">
    <property type="entry name" value="proA"/>
    <property type="match status" value="1"/>
</dbReference>
<dbReference type="PANTHER" id="PTHR11063:SF8">
    <property type="entry name" value="DELTA-1-PYRROLINE-5-CARBOXYLATE SYNTHASE"/>
    <property type="match status" value="1"/>
</dbReference>
<dbReference type="PANTHER" id="PTHR11063">
    <property type="entry name" value="GLUTAMATE SEMIALDEHYDE DEHYDROGENASE"/>
    <property type="match status" value="1"/>
</dbReference>
<dbReference type="Pfam" id="PF00171">
    <property type="entry name" value="Aldedh"/>
    <property type="match status" value="1"/>
</dbReference>
<dbReference type="PIRSF" id="PIRSF000151">
    <property type="entry name" value="GPR"/>
    <property type="match status" value="1"/>
</dbReference>
<dbReference type="SUPFAM" id="SSF53720">
    <property type="entry name" value="ALDH-like"/>
    <property type="match status" value="1"/>
</dbReference>
<dbReference type="PROSITE" id="PS01223">
    <property type="entry name" value="PROA"/>
    <property type="match status" value="1"/>
</dbReference>
<reference key="1">
    <citation type="journal article" date="2008" name="J. Bacteriol.">
        <title>Complete genome sequence of uropathogenic Proteus mirabilis, a master of both adherence and motility.</title>
        <authorList>
            <person name="Pearson M.M."/>
            <person name="Sebaihia M."/>
            <person name="Churcher C."/>
            <person name="Quail M.A."/>
            <person name="Seshasayee A.S."/>
            <person name="Luscombe N.M."/>
            <person name="Abdellah Z."/>
            <person name="Arrosmith C."/>
            <person name="Atkin B."/>
            <person name="Chillingworth T."/>
            <person name="Hauser H."/>
            <person name="Jagels K."/>
            <person name="Moule S."/>
            <person name="Mungall K."/>
            <person name="Norbertczak H."/>
            <person name="Rabbinowitsch E."/>
            <person name="Walker D."/>
            <person name="Whithead S."/>
            <person name="Thomson N.R."/>
            <person name="Rather P.N."/>
            <person name="Parkhill J."/>
            <person name="Mobley H.L.T."/>
        </authorList>
    </citation>
    <scope>NUCLEOTIDE SEQUENCE [LARGE SCALE GENOMIC DNA]</scope>
    <source>
        <strain>HI4320</strain>
    </source>
</reference>
<evidence type="ECO:0000255" key="1">
    <source>
        <dbReference type="HAMAP-Rule" id="MF_00412"/>
    </source>
</evidence>
<sequence>MLEQMGKAAREASWHLAQLSTEQKNQALLVIADLLEQQEAIILAANEKDMVAARESNINAAMLDRLLLTSERLKAIADDVRQVCHLEDPVGQVIDGRLLDSGLRLERRRVPLGVVGVIYEARPNVTIDVASLCLKTGNAAILRGGKETHHTNQAVVAVIQQALETCAIPAAAIQAIDKPDRELVAKMLKMDEYIDMLIPRGGAGLHKLCREQSTIPVITGGIGVCHTFVDESADLDQALNVIINAKVQRPSACNSLETLLVHEAIAESFLPQLSDAMAAQKVTLHASQRAITALKKGRATVVDVTEADYCDEWLSLDLNVEVVNDLTAAIAHIRQYGTAHSDAILTQSISHADRFVRQVDSAAVYVNASTRFTDGGQFGLGAEVAVSTQKLHARGPMGLDALTTYKWIGYGDNTLRR</sequence>
<gene>
    <name evidence="1" type="primary">proA</name>
    <name type="ordered locus">PMI0370</name>
</gene>
<comment type="function">
    <text evidence="1">Catalyzes the NADPH-dependent reduction of L-glutamate 5-phosphate into L-glutamate 5-semialdehyde and phosphate. The product spontaneously undergoes cyclization to form 1-pyrroline-5-carboxylate.</text>
</comment>
<comment type="catalytic activity">
    <reaction evidence="1">
        <text>L-glutamate 5-semialdehyde + phosphate + NADP(+) = L-glutamyl 5-phosphate + NADPH + H(+)</text>
        <dbReference type="Rhea" id="RHEA:19541"/>
        <dbReference type="ChEBI" id="CHEBI:15378"/>
        <dbReference type="ChEBI" id="CHEBI:43474"/>
        <dbReference type="ChEBI" id="CHEBI:57783"/>
        <dbReference type="ChEBI" id="CHEBI:58066"/>
        <dbReference type="ChEBI" id="CHEBI:58274"/>
        <dbReference type="ChEBI" id="CHEBI:58349"/>
        <dbReference type="EC" id="1.2.1.41"/>
    </reaction>
</comment>
<comment type="pathway">
    <text evidence="1">Amino-acid biosynthesis; L-proline biosynthesis; L-glutamate 5-semialdehyde from L-glutamate: step 2/2.</text>
</comment>
<comment type="subcellular location">
    <subcellularLocation>
        <location evidence="1">Cytoplasm</location>
    </subcellularLocation>
</comment>
<comment type="similarity">
    <text evidence="1">Belongs to the gamma-glutamyl phosphate reductase family.</text>
</comment>